<dbReference type="EMBL" id="AE016817">
    <property type="protein sequence ID" value="AAS51781.2"/>
    <property type="molecule type" value="Genomic_DNA"/>
</dbReference>
<dbReference type="RefSeq" id="NP_983957.2">
    <property type="nucleotide sequence ID" value="NM_209310.2"/>
</dbReference>
<dbReference type="SMR" id="Q75AQ9"/>
<dbReference type="FunCoup" id="Q75AQ9">
    <property type="interactions" value="83"/>
</dbReference>
<dbReference type="STRING" id="284811.Q75AQ9"/>
<dbReference type="EnsemblFungi" id="AAS51781">
    <property type="protein sequence ID" value="AAS51781"/>
    <property type="gene ID" value="AGOS_ADL139W"/>
</dbReference>
<dbReference type="GeneID" id="4620099"/>
<dbReference type="KEGG" id="ago:AGOS_ADL139W"/>
<dbReference type="eggNOG" id="ENOG502QTAZ">
    <property type="taxonomic scope" value="Eukaryota"/>
</dbReference>
<dbReference type="HOGENOM" id="CLU_027501_3_0_1"/>
<dbReference type="InParanoid" id="Q75AQ9"/>
<dbReference type="OMA" id="NEDTRAT"/>
<dbReference type="OrthoDB" id="2305498at2759"/>
<dbReference type="Proteomes" id="UP000000591">
    <property type="component" value="Chromosome IV"/>
</dbReference>
<dbReference type="GO" id="GO:0005935">
    <property type="term" value="C:cellular bud neck"/>
    <property type="evidence" value="ECO:0007669"/>
    <property type="project" value="EnsemblFungi"/>
</dbReference>
<dbReference type="GO" id="GO:0000131">
    <property type="term" value="C:incipient cellular bud site"/>
    <property type="evidence" value="ECO:0007669"/>
    <property type="project" value="EnsemblFungi"/>
</dbReference>
<dbReference type="GO" id="GO:0070880">
    <property type="term" value="P:fungal-type cell wall beta-glucan biosynthetic process"/>
    <property type="evidence" value="ECO:0000318"/>
    <property type="project" value="GO_Central"/>
</dbReference>
<dbReference type="GO" id="GO:0032995">
    <property type="term" value="P:regulation of fungal-type cell wall biogenesis"/>
    <property type="evidence" value="ECO:0007669"/>
    <property type="project" value="EnsemblFungi"/>
</dbReference>
<dbReference type="GO" id="GO:0007346">
    <property type="term" value="P:regulation of mitotic cell cycle"/>
    <property type="evidence" value="ECO:0007669"/>
    <property type="project" value="EnsemblFungi"/>
</dbReference>
<dbReference type="Gene3D" id="3.40.1580.10">
    <property type="entry name" value="SMI1/KNR4-like"/>
    <property type="match status" value="1"/>
</dbReference>
<dbReference type="InterPro" id="IPR009203">
    <property type="entry name" value="Knr4/Smi1"/>
</dbReference>
<dbReference type="InterPro" id="IPR018958">
    <property type="entry name" value="Knr4/Smi1-like_dom"/>
</dbReference>
<dbReference type="InterPro" id="IPR037883">
    <property type="entry name" value="Knr4/Smi1-like_sf"/>
</dbReference>
<dbReference type="InterPro" id="IPR051873">
    <property type="entry name" value="KNR4/SMI1_regulator"/>
</dbReference>
<dbReference type="PANTHER" id="PTHR47432">
    <property type="entry name" value="CELL WALL ASSEMBLY REGULATOR SMI1"/>
    <property type="match status" value="1"/>
</dbReference>
<dbReference type="PANTHER" id="PTHR47432:SF1">
    <property type="entry name" value="CELL WALL ASSEMBLY REGULATOR SMI1"/>
    <property type="match status" value="1"/>
</dbReference>
<dbReference type="Pfam" id="PF09346">
    <property type="entry name" value="SMI1_KNR4"/>
    <property type="match status" value="1"/>
</dbReference>
<dbReference type="PIRSF" id="PIRSF017023">
    <property type="entry name" value="KNR4"/>
    <property type="match status" value="1"/>
</dbReference>
<dbReference type="SMART" id="SM00860">
    <property type="entry name" value="SMI1_KNR4"/>
    <property type="match status" value="1"/>
</dbReference>
<dbReference type="SUPFAM" id="SSF160631">
    <property type="entry name" value="SMI1/KNR4-like"/>
    <property type="match status" value="1"/>
</dbReference>
<reference key="1">
    <citation type="journal article" date="2004" name="Science">
        <title>The Ashbya gossypii genome as a tool for mapping the ancient Saccharomyces cerevisiae genome.</title>
        <authorList>
            <person name="Dietrich F.S."/>
            <person name="Voegeli S."/>
            <person name="Brachat S."/>
            <person name="Lerch A."/>
            <person name="Gates K."/>
            <person name="Steiner S."/>
            <person name="Mohr C."/>
            <person name="Poehlmann R."/>
            <person name="Luedi P."/>
            <person name="Choi S."/>
            <person name="Wing R.A."/>
            <person name="Flavier A."/>
            <person name="Gaffney T.D."/>
            <person name="Philippsen P."/>
        </authorList>
    </citation>
    <scope>NUCLEOTIDE SEQUENCE [LARGE SCALE GENOMIC DNA]</scope>
    <source>
        <strain>ATCC 10895 / CBS 109.51 / FGSC 9923 / NRRL Y-1056</strain>
    </source>
</reference>
<reference key="2">
    <citation type="journal article" date="2013" name="G3 (Bethesda)">
        <title>Genomes of Ashbya fungi isolated from insects reveal four mating-type loci, numerous translocations, lack of transposons, and distinct gene duplications.</title>
        <authorList>
            <person name="Dietrich F.S."/>
            <person name="Voegeli S."/>
            <person name="Kuo S."/>
            <person name="Philippsen P."/>
        </authorList>
    </citation>
    <scope>GENOME REANNOTATION</scope>
    <scope>SEQUENCE REVISION TO 592</scope>
    <source>
        <strain>ATCC 10895 / CBS 109.51 / FGSC 9923 / NRRL Y-1056</strain>
    </source>
</reference>
<feature type="chain" id="PRO_0000209872" description="KNR4/SMI1 homolog">
    <location>
        <begin position="1"/>
        <end position="657"/>
    </location>
</feature>
<feature type="region of interest" description="Disordered" evidence="1">
    <location>
        <begin position="168"/>
        <end position="193"/>
    </location>
</feature>
<feature type="region of interest" description="Disordered" evidence="1">
    <location>
        <begin position="366"/>
        <end position="402"/>
    </location>
</feature>
<feature type="region of interest" description="Disordered" evidence="1">
    <location>
        <begin position="416"/>
        <end position="657"/>
    </location>
</feature>
<feature type="compositionally biased region" description="Polar residues" evidence="1">
    <location>
        <begin position="174"/>
        <end position="187"/>
    </location>
</feature>
<feature type="compositionally biased region" description="Polar residues" evidence="1">
    <location>
        <begin position="416"/>
        <end position="436"/>
    </location>
</feature>
<feature type="compositionally biased region" description="Low complexity" evidence="1">
    <location>
        <begin position="444"/>
        <end position="455"/>
    </location>
</feature>
<feature type="compositionally biased region" description="Low complexity" evidence="1">
    <location>
        <begin position="473"/>
        <end position="482"/>
    </location>
</feature>
<feature type="compositionally biased region" description="Basic and acidic residues" evidence="1">
    <location>
        <begin position="492"/>
        <end position="504"/>
    </location>
</feature>
<feature type="compositionally biased region" description="Polar residues" evidence="1">
    <location>
        <begin position="505"/>
        <end position="521"/>
    </location>
</feature>
<feature type="compositionally biased region" description="Basic and acidic residues" evidence="1">
    <location>
        <begin position="535"/>
        <end position="561"/>
    </location>
</feature>
<feature type="compositionally biased region" description="Basic and acidic residues" evidence="1">
    <location>
        <begin position="569"/>
        <end position="604"/>
    </location>
</feature>
<feature type="compositionally biased region" description="Basic and acidic residues" evidence="1">
    <location>
        <begin position="627"/>
        <end position="650"/>
    </location>
</feature>
<evidence type="ECO:0000256" key="1">
    <source>
        <dbReference type="SAM" id="MobiDB-lite"/>
    </source>
</evidence>
<evidence type="ECO:0000305" key="2"/>
<proteinExistence type="inferred from homology"/>
<organism>
    <name type="scientific">Eremothecium gossypii (strain ATCC 10895 / CBS 109.51 / FGSC 9923 / NRRL Y-1056)</name>
    <name type="common">Yeast</name>
    <name type="synonym">Ashbya gossypii</name>
    <dbReference type="NCBI Taxonomy" id="284811"/>
    <lineage>
        <taxon>Eukaryota</taxon>
        <taxon>Fungi</taxon>
        <taxon>Dikarya</taxon>
        <taxon>Ascomycota</taxon>
        <taxon>Saccharomycotina</taxon>
        <taxon>Saccharomycetes</taxon>
        <taxon>Saccharomycetales</taxon>
        <taxon>Saccharomycetaceae</taxon>
        <taxon>Eremothecium</taxon>
    </lineage>
</organism>
<name>SMI1_EREGS</name>
<comment type="similarity">
    <text evidence="2">Belongs to the KNR4/SMI1 family.</text>
</comment>
<protein>
    <recommendedName>
        <fullName>KNR4/SMI1 homolog</fullName>
    </recommendedName>
</protein>
<sequence>MESLKRAWNQLVYTFSTEDRYAEYTPQGSTNVVGGEPFDTSNASRIQLNEFVDGAEVGGNDGVSECLLAWRHIDSWCSEHNPDLYATLSSPCTNNDIMWAEKDLAITFPAAVRASLRTHDGQEDVESMQGASGLIYGLKLMGLEEVVIMTRTWRNVAANLQRQMARMEQQQRAKSSSELPQTVTPQAVKQKGYGKVDNQDYHANPHLQKDISQNYNKQFKLDKLPKQGSIPPLAIQPVYAHPGWIPLVTDHAGNHIGVDLAPGPKGKYAQVILFGREFDTKFVVADNWGDFLLGFVNDLEKGNWLLVDNTDDYLNGEGDLVFVDHATRGPILNYLAVLKKRSWEKWQSTKPTQPLTSASVASFSTSSSVVNRPTPADAAGQARKTQGYSPMVPGASSNESVSFIPDSDVIMEESNLTQTDASSKGTTKPATPNPMTAPTVIRVSTPGSPSAAAEAPEPPKKATPPKAAKETKTPTVTKESTPASDANVDTELDSKNTETNEDTRATNTAHSMAPTVSSAITDLTAIDEPVATAGKPKDTEKTDDAKDVHEANKQDLTKANEAEAEENAVEPKDNEVSADSKVKARAESKSDHDSKTNNIPEKKVPQVTAKALPESDRGQASDAASTKSDKKAKPAEDPKEHDLKIEKLNEDFETVAL</sequence>
<keyword id="KW-1185">Reference proteome</keyword>
<gene>
    <name type="ordered locus">ADL139W</name>
</gene>
<accession>Q75AQ9</accession>